<name>PLSB_ECOBW</name>
<comment type="catalytic activity">
    <reaction evidence="1">
        <text>sn-glycerol 3-phosphate + an acyl-CoA = a 1-acyl-sn-glycero-3-phosphate + CoA</text>
        <dbReference type="Rhea" id="RHEA:15325"/>
        <dbReference type="ChEBI" id="CHEBI:57287"/>
        <dbReference type="ChEBI" id="CHEBI:57597"/>
        <dbReference type="ChEBI" id="CHEBI:57970"/>
        <dbReference type="ChEBI" id="CHEBI:58342"/>
        <dbReference type="EC" id="2.3.1.15"/>
    </reaction>
</comment>
<comment type="pathway">
    <text evidence="1">Phospholipid metabolism; CDP-diacylglycerol biosynthesis; CDP-diacylglycerol from sn-glycerol 3-phosphate: step 1/3.</text>
</comment>
<comment type="subcellular location">
    <subcellularLocation>
        <location evidence="1">Cell inner membrane</location>
        <topology evidence="1">Peripheral membrane protein</topology>
        <orientation evidence="1">Cytoplasmic side</orientation>
    </subcellularLocation>
</comment>
<comment type="domain">
    <text evidence="1">The HXXXXD motif is essential for acyltransferase activity and may constitute the binding site for the phosphate moiety of the glycerol-3-phosphate.</text>
</comment>
<comment type="similarity">
    <text evidence="1">Belongs to the GPAT/DAPAT family.</text>
</comment>
<reference key="1">
    <citation type="journal article" date="2009" name="J. Bacteriol.">
        <title>Genomic sequencing reveals regulatory mutations and recombinational events in the widely used MC4100 lineage of Escherichia coli K-12.</title>
        <authorList>
            <person name="Ferenci T."/>
            <person name="Zhou Z."/>
            <person name="Betteridge T."/>
            <person name="Ren Y."/>
            <person name="Liu Y."/>
            <person name="Feng L."/>
            <person name="Reeves P.R."/>
            <person name="Wang L."/>
        </authorList>
    </citation>
    <scope>NUCLEOTIDE SEQUENCE [LARGE SCALE GENOMIC DNA]</scope>
    <source>
        <strain>K12 / MC4100 / BW2952</strain>
    </source>
</reference>
<sequence>MSGWPRIYYKLLNLPLSILVKSKSIPADPAPELGLDTSRPIMYVLPYNSKADLLTLRAQCLAHDLPDPLEPLEIDGTLLPRYVFIHGGPRVFTYYTPKEESIKLFHDYLDLHRSNPNLDVQMVPVSVMFGRAPGREKGEVNPPLRMLNGVQKFFAVLWLGRDSFVRFSPSVSLRRMADEHGTDKTIAQKLARVARMHFARQRLAAVGPRLPARQDLFNKLLASRAIAKAVEDEARSKKISHEKAQQNAIALMEEIAANFSYEMIRLTDRILGFTWNRLYQGINVHNAERVRQLAHDGHELVYVPCHRSHMDYLLLSYVLYHQGLVPPHIAAGINLNFWPAGPIFRRLGAFFIRRTFKGNKLYSTVFREYLGELFSRGYSVEYFVEGGRSRTGRLLDPKTGTLSMTIQAMLRGGTRPITLIPIYIGYEHVMEVGTYAKELRGATKEKESLPQMLRGLSKLRNLGQGYVNFGEPMPLMTYLNQHVPDWRESIDPIEAVRPAWLTPTVNNIAADLMVRINNAGAANAMNLCCTALLASRQRSLTREQLTEQLNCYLDLMRNVPYSTDSTVPSASASELIDHALQMNKFEVEKDTIGDIIILPREQAVLMTYYRNNIAHMLVLPSLMAAIVTQHRHISRDVLMEHVNVLYPMLKAELFLRWDRDELPDVIDALANEMQRQGLITLQDDELHINPAHSRTLQLLAAGARETLQRYAITFWLLSANPSINRGTLEKESRTVAQRLSVLHGINAPEFFDKAVFSSLVLTLRDEGYISDSGDAEPAETMKVYQLLAELITSDVRLTIESATQGEG</sequence>
<proteinExistence type="inferred from homology"/>
<feature type="chain" id="PRO_1000205848" description="Glycerol-3-phosphate acyltransferase">
    <location>
        <begin position="1"/>
        <end position="807"/>
    </location>
</feature>
<feature type="short sequence motif" description="HXXXXD motif">
    <location>
        <begin position="305"/>
        <end position="310"/>
    </location>
</feature>
<dbReference type="EC" id="2.3.1.15" evidence="1"/>
<dbReference type="EMBL" id="CP001396">
    <property type="protein sequence ID" value="ACR63358.1"/>
    <property type="molecule type" value="Genomic_DNA"/>
</dbReference>
<dbReference type="RefSeq" id="WP_000017354.1">
    <property type="nucleotide sequence ID" value="NC_012759.1"/>
</dbReference>
<dbReference type="SMR" id="C5A134"/>
<dbReference type="GeneID" id="75204185"/>
<dbReference type="KEGG" id="ebw:BWG_3754"/>
<dbReference type="HOGENOM" id="CLU_015407_0_0_6"/>
<dbReference type="UniPathway" id="UPA00557">
    <property type="reaction ID" value="UER00612"/>
</dbReference>
<dbReference type="GO" id="GO:0005886">
    <property type="term" value="C:plasma membrane"/>
    <property type="evidence" value="ECO:0007669"/>
    <property type="project" value="UniProtKB-SubCell"/>
</dbReference>
<dbReference type="GO" id="GO:0004366">
    <property type="term" value="F:glycerol-3-phosphate O-acyltransferase activity"/>
    <property type="evidence" value="ECO:0007669"/>
    <property type="project" value="UniProtKB-UniRule"/>
</dbReference>
<dbReference type="GO" id="GO:0016024">
    <property type="term" value="P:CDP-diacylglycerol biosynthetic process"/>
    <property type="evidence" value="ECO:0007669"/>
    <property type="project" value="UniProtKB-UniRule"/>
</dbReference>
<dbReference type="GO" id="GO:0006631">
    <property type="term" value="P:fatty acid metabolic process"/>
    <property type="evidence" value="ECO:0007669"/>
    <property type="project" value="TreeGrafter"/>
</dbReference>
<dbReference type="CDD" id="cd07993">
    <property type="entry name" value="LPLAT_DHAPAT-like"/>
    <property type="match status" value="1"/>
</dbReference>
<dbReference type="HAMAP" id="MF_00393">
    <property type="entry name" value="Glyc3P_acyltrans"/>
    <property type="match status" value="1"/>
</dbReference>
<dbReference type="InterPro" id="IPR022284">
    <property type="entry name" value="GPAT/DHAPAT"/>
</dbReference>
<dbReference type="InterPro" id="IPR045520">
    <property type="entry name" value="GPAT/DHAPAT_C"/>
</dbReference>
<dbReference type="InterPro" id="IPR041728">
    <property type="entry name" value="GPAT/DHAPAT_LPLAT"/>
</dbReference>
<dbReference type="InterPro" id="IPR028354">
    <property type="entry name" value="GPAT_PlsB"/>
</dbReference>
<dbReference type="InterPro" id="IPR002123">
    <property type="entry name" value="Plipid/glycerol_acylTrfase"/>
</dbReference>
<dbReference type="NCBIfam" id="TIGR03703">
    <property type="entry name" value="plsB"/>
    <property type="match status" value="1"/>
</dbReference>
<dbReference type="NCBIfam" id="NF003441">
    <property type="entry name" value="PRK04974.1"/>
    <property type="match status" value="1"/>
</dbReference>
<dbReference type="PANTHER" id="PTHR12563:SF17">
    <property type="entry name" value="DIHYDROXYACETONE PHOSPHATE ACYLTRANSFERASE"/>
    <property type="match status" value="1"/>
</dbReference>
<dbReference type="PANTHER" id="PTHR12563">
    <property type="entry name" value="GLYCEROL-3-PHOSPHATE ACYLTRANSFERASE"/>
    <property type="match status" value="1"/>
</dbReference>
<dbReference type="Pfam" id="PF01553">
    <property type="entry name" value="Acyltransferase"/>
    <property type="match status" value="1"/>
</dbReference>
<dbReference type="Pfam" id="PF19277">
    <property type="entry name" value="GPAT_C"/>
    <property type="match status" value="1"/>
</dbReference>
<dbReference type="PIRSF" id="PIRSF500064">
    <property type="entry name" value="GPAT"/>
    <property type="match status" value="1"/>
</dbReference>
<dbReference type="PIRSF" id="PIRSF000437">
    <property type="entry name" value="GPAT_DHAPAT"/>
    <property type="match status" value="1"/>
</dbReference>
<dbReference type="SMART" id="SM00563">
    <property type="entry name" value="PlsC"/>
    <property type="match status" value="1"/>
</dbReference>
<dbReference type="SUPFAM" id="SSF69593">
    <property type="entry name" value="Glycerol-3-phosphate (1)-acyltransferase"/>
    <property type="match status" value="1"/>
</dbReference>
<evidence type="ECO:0000255" key="1">
    <source>
        <dbReference type="HAMAP-Rule" id="MF_00393"/>
    </source>
</evidence>
<gene>
    <name evidence="1" type="primary">plsB</name>
    <name type="ordered locus">BWG_3754</name>
</gene>
<keyword id="KW-0012">Acyltransferase</keyword>
<keyword id="KW-0997">Cell inner membrane</keyword>
<keyword id="KW-1003">Cell membrane</keyword>
<keyword id="KW-0444">Lipid biosynthesis</keyword>
<keyword id="KW-0443">Lipid metabolism</keyword>
<keyword id="KW-0472">Membrane</keyword>
<keyword id="KW-0594">Phospholipid biosynthesis</keyword>
<keyword id="KW-1208">Phospholipid metabolism</keyword>
<keyword id="KW-0808">Transferase</keyword>
<protein>
    <recommendedName>
        <fullName evidence="1">Glycerol-3-phosphate acyltransferase</fullName>
        <shortName evidence="1">GPAT</shortName>
        <ecNumber evidence="1">2.3.1.15</ecNumber>
    </recommendedName>
</protein>
<accession>C5A134</accession>
<organism>
    <name type="scientific">Escherichia coli (strain K12 / MC4100 / BW2952)</name>
    <dbReference type="NCBI Taxonomy" id="595496"/>
    <lineage>
        <taxon>Bacteria</taxon>
        <taxon>Pseudomonadati</taxon>
        <taxon>Pseudomonadota</taxon>
        <taxon>Gammaproteobacteria</taxon>
        <taxon>Enterobacterales</taxon>
        <taxon>Enterobacteriaceae</taxon>
        <taxon>Escherichia</taxon>
    </lineage>
</organism>